<reference key="1">
    <citation type="submission" date="2003-06" db="EMBL/GenBank/DDBJ databases">
        <title>The complete genome sequence of Haemophilus ducreyi.</title>
        <authorList>
            <person name="Munson R.S. Jr."/>
            <person name="Ray W.C."/>
            <person name="Mahairas G."/>
            <person name="Sabo P."/>
            <person name="Mungur R."/>
            <person name="Johnson L."/>
            <person name="Nguyen D."/>
            <person name="Wang J."/>
            <person name="Forst C."/>
            <person name="Hood L."/>
        </authorList>
    </citation>
    <scope>NUCLEOTIDE SEQUENCE [LARGE SCALE GENOMIC DNA]</scope>
    <source>
        <strain>35000HP / ATCC 700724</strain>
    </source>
</reference>
<dbReference type="EC" id="2.7.7.6" evidence="1"/>
<dbReference type="EMBL" id="AE017143">
    <property type="protein sequence ID" value="AAP96671.1"/>
    <property type="molecule type" value="Genomic_DNA"/>
</dbReference>
<dbReference type="RefSeq" id="WP_010945698.1">
    <property type="nucleotide sequence ID" value="NC_002940.2"/>
</dbReference>
<dbReference type="SMR" id="Q7VKF8"/>
<dbReference type="STRING" id="233412.HD_1951"/>
<dbReference type="KEGG" id="hdu:HD_1951"/>
<dbReference type="eggNOG" id="COG0202">
    <property type="taxonomic scope" value="Bacteria"/>
</dbReference>
<dbReference type="HOGENOM" id="CLU_053084_0_1_6"/>
<dbReference type="OrthoDB" id="9805706at2"/>
<dbReference type="Proteomes" id="UP000001022">
    <property type="component" value="Chromosome"/>
</dbReference>
<dbReference type="GO" id="GO:0005737">
    <property type="term" value="C:cytoplasm"/>
    <property type="evidence" value="ECO:0007669"/>
    <property type="project" value="UniProtKB-ARBA"/>
</dbReference>
<dbReference type="GO" id="GO:0000428">
    <property type="term" value="C:DNA-directed RNA polymerase complex"/>
    <property type="evidence" value="ECO:0007669"/>
    <property type="project" value="UniProtKB-KW"/>
</dbReference>
<dbReference type="GO" id="GO:0003677">
    <property type="term" value="F:DNA binding"/>
    <property type="evidence" value="ECO:0007669"/>
    <property type="project" value="UniProtKB-UniRule"/>
</dbReference>
<dbReference type="GO" id="GO:0003899">
    <property type="term" value="F:DNA-directed RNA polymerase activity"/>
    <property type="evidence" value="ECO:0007669"/>
    <property type="project" value="UniProtKB-UniRule"/>
</dbReference>
<dbReference type="GO" id="GO:0046983">
    <property type="term" value="F:protein dimerization activity"/>
    <property type="evidence" value="ECO:0007669"/>
    <property type="project" value="InterPro"/>
</dbReference>
<dbReference type="GO" id="GO:0006351">
    <property type="term" value="P:DNA-templated transcription"/>
    <property type="evidence" value="ECO:0007669"/>
    <property type="project" value="UniProtKB-UniRule"/>
</dbReference>
<dbReference type="CDD" id="cd06928">
    <property type="entry name" value="RNAP_alpha_NTD"/>
    <property type="match status" value="1"/>
</dbReference>
<dbReference type="FunFam" id="1.10.150.20:FF:000001">
    <property type="entry name" value="DNA-directed RNA polymerase subunit alpha"/>
    <property type="match status" value="1"/>
</dbReference>
<dbReference type="FunFam" id="2.170.120.12:FF:000001">
    <property type="entry name" value="DNA-directed RNA polymerase subunit alpha"/>
    <property type="match status" value="1"/>
</dbReference>
<dbReference type="Gene3D" id="1.10.150.20">
    <property type="entry name" value="5' to 3' exonuclease, C-terminal subdomain"/>
    <property type="match status" value="1"/>
</dbReference>
<dbReference type="Gene3D" id="2.170.120.12">
    <property type="entry name" value="DNA-directed RNA polymerase, insert domain"/>
    <property type="match status" value="1"/>
</dbReference>
<dbReference type="Gene3D" id="3.30.1360.10">
    <property type="entry name" value="RNA polymerase, RBP11-like subunit"/>
    <property type="match status" value="1"/>
</dbReference>
<dbReference type="HAMAP" id="MF_00059">
    <property type="entry name" value="RNApol_bact_RpoA"/>
    <property type="match status" value="1"/>
</dbReference>
<dbReference type="InterPro" id="IPR011262">
    <property type="entry name" value="DNA-dir_RNA_pol_insert"/>
</dbReference>
<dbReference type="InterPro" id="IPR011263">
    <property type="entry name" value="DNA-dir_RNA_pol_RpoA/D/Rpb3"/>
</dbReference>
<dbReference type="InterPro" id="IPR011773">
    <property type="entry name" value="DNA-dir_RpoA"/>
</dbReference>
<dbReference type="InterPro" id="IPR036603">
    <property type="entry name" value="RBP11-like"/>
</dbReference>
<dbReference type="InterPro" id="IPR011260">
    <property type="entry name" value="RNAP_asu_C"/>
</dbReference>
<dbReference type="InterPro" id="IPR036643">
    <property type="entry name" value="RNApol_insert_sf"/>
</dbReference>
<dbReference type="NCBIfam" id="NF003513">
    <property type="entry name" value="PRK05182.1-2"/>
    <property type="match status" value="1"/>
</dbReference>
<dbReference type="NCBIfam" id="NF003519">
    <property type="entry name" value="PRK05182.2-5"/>
    <property type="match status" value="1"/>
</dbReference>
<dbReference type="NCBIfam" id="TIGR02027">
    <property type="entry name" value="rpoA"/>
    <property type="match status" value="1"/>
</dbReference>
<dbReference type="Pfam" id="PF01000">
    <property type="entry name" value="RNA_pol_A_bac"/>
    <property type="match status" value="1"/>
</dbReference>
<dbReference type="Pfam" id="PF03118">
    <property type="entry name" value="RNA_pol_A_CTD"/>
    <property type="match status" value="1"/>
</dbReference>
<dbReference type="Pfam" id="PF01193">
    <property type="entry name" value="RNA_pol_L"/>
    <property type="match status" value="1"/>
</dbReference>
<dbReference type="SMART" id="SM00662">
    <property type="entry name" value="RPOLD"/>
    <property type="match status" value="1"/>
</dbReference>
<dbReference type="SUPFAM" id="SSF47789">
    <property type="entry name" value="C-terminal domain of RNA polymerase alpha subunit"/>
    <property type="match status" value="1"/>
</dbReference>
<dbReference type="SUPFAM" id="SSF56553">
    <property type="entry name" value="Insert subdomain of RNA polymerase alpha subunit"/>
    <property type="match status" value="1"/>
</dbReference>
<dbReference type="SUPFAM" id="SSF55257">
    <property type="entry name" value="RBP11-like subunits of RNA polymerase"/>
    <property type="match status" value="1"/>
</dbReference>
<name>RPOA_HAEDU</name>
<accession>Q7VKF8</accession>
<comment type="function">
    <text evidence="1">DNA-dependent RNA polymerase catalyzes the transcription of DNA into RNA using the four ribonucleoside triphosphates as substrates.</text>
</comment>
<comment type="catalytic activity">
    <reaction evidence="1">
        <text>RNA(n) + a ribonucleoside 5'-triphosphate = RNA(n+1) + diphosphate</text>
        <dbReference type="Rhea" id="RHEA:21248"/>
        <dbReference type="Rhea" id="RHEA-COMP:14527"/>
        <dbReference type="Rhea" id="RHEA-COMP:17342"/>
        <dbReference type="ChEBI" id="CHEBI:33019"/>
        <dbReference type="ChEBI" id="CHEBI:61557"/>
        <dbReference type="ChEBI" id="CHEBI:140395"/>
        <dbReference type="EC" id="2.7.7.6"/>
    </reaction>
</comment>
<comment type="subunit">
    <text evidence="1">Homodimer. The RNAP catalytic core consists of 2 alpha, 1 beta, 1 beta' and 1 omega subunit. When a sigma factor is associated with the core the holoenzyme is formed, which can initiate transcription.</text>
</comment>
<comment type="domain">
    <text evidence="1">The N-terminal domain is essential for RNAP assembly and basal transcription, whereas the C-terminal domain is involved in interaction with transcriptional regulators and with upstream promoter elements.</text>
</comment>
<comment type="similarity">
    <text evidence="1">Belongs to the RNA polymerase alpha chain family.</text>
</comment>
<evidence type="ECO:0000255" key="1">
    <source>
        <dbReference type="HAMAP-Rule" id="MF_00059"/>
    </source>
</evidence>
<organism>
    <name type="scientific">Haemophilus ducreyi (strain 35000HP / ATCC 700724)</name>
    <dbReference type="NCBI Taxonomy" id="233412"/>
    <lineage>
        <taxon>Bacteria</taxon>
        <taxon>Pseudomonadati</taxon>
        <taxon>Pseudomonadota</taxon>
        <taxon>Gammaproteobacteria</taxon>
        <taxon>Pasteurellales</taxon>
        <taxon>Pasteurellaceae</taxon>
        <taxon>Haemophilus</taxon>
    </lineage>
</organism>
<protein>
    <recommendedName>
        <fullName evidence="1">DNA-directed RNA polymerase subunit alpha</fullName>
        <shortName evidence="1">RNAP subunit alpha</shortName>
        <ecNumber evidence="1">2.7.7.6</ecNumber>
    </recommendedName>
    <alternativeName>
        <fullName evidence="1">RNA polymerase subunit alpha</fullName>
    </alternativeName>
    <alternativeName>
        <fullName evidence="1">Transcriptase subunit alpha</fullName>
    </alternativeName>
</protein>
<gene>
    <name evidence="1" type="primary">rpoA</name>
    <name type="ordered locus">HD_1951</name>
</gene>
<keyword id="KW-0240">DNA-directed RNA polymerase</keyword>
<keyword id="KW-0548">Nucleotidyltransferase</keyword>
<keyword id="KW-1185">Reference proteome</keyword>
<keyword id="KW-0804">Transcription</keyword>
<keyword id="KW-0808">Transferase</keyword>
<proteinExistence type="inferred from homology"/>
<sequence length="329" mass="36418">MQGSVIEFLKPHLVNIEQISSTHAKVTLEPLERGFGHTLGNALRRILLSSMPGCAVAEVEIDGVLHEYSSKEGVQEDILEVLLNLKGLAVKVSGKNDVTLTLNKSGIGPVLAADITHDGDVEIINPNHVICHLTDKDASINMRIYVQRGRGYVPASARVHSQDEDRPIGRLLVDARFSPVDRIAYNVEAARVEQRTDLDKLIIDMETNGTIDPEEAIRRAATILAEQLDAFVDLRDVRQPEIKEEKPEFDPILLRPVDDLELTVRSANCLKAETIHYIGDLVQRTEVELLKTPNLGKKSLTEIKDVLASRGLSLGMRLENWPPASIAED</sequence>
<feature type="chain" id="PRO_0000175313" description="DNA-directed RNA polymerase subunit alpha">
    <location>
        <begin position="1"/>
        <end position="329"/>
    </location>
</feature>
<feature type="region of interest" description="Alpha N-terminal domain (alpha-NTD)" evidence="1">
    <location>
        <begin position="1"/>
        <end position="235"/>
    </location>
</feature>
<feature type="region of interest" description="Alpha C-terminal domain (alpha-CTD)" evidence="1">
    <location>
        <begin position="249"/>
        <end position="329"/>
    </location>
</feature>